<keyword id="KW-0067">ATP-binding</keyword>
<keyword id="KW-0143">Chaperone</keyword>
<keyword id="KW-0963">Cytoplasm</keyword>
<keyword id="KW-0413">Isomerase</keyword>
<keyword id="KW-0547">Nucleotide-binding</keyword>
<keyword id="KW-1185">Reference proteome</keyword>
<organism>
    <name type="scientific">Mycoplasma pneumoniae (strain ATCC 29342 / M129 / Subtype 1)</name>
    <name type="common">Mycoplasmoides pneumoniae</name>
    <dbReference type="NCBI Taxonomy" id="272634"/>
    <lineage>
        <taxon>Bacteria</taxon>
        <taxon>Bacillati</taxon>
        <taxon>Mycoplasmatota</taxon>
        <taxon>Mycoplasmoidales</taxon>
        <taxon>Mycoplasmoidaceae</taxon>
        <taxon>Mycoplasmoides</taxon>
    </lineage>
</organism>
<protein>
    <recommendedName>
        <fullName evidence="1">Chaperonin GroEL</fullName>
        <ecNumber evidence="1">5.6.1.7</ecNumber>
    </recommendedName>
    <alternativeName>
        <fullName evidence="1">60 kDa chaperonin</fullName>
    </alternativeName>
    <alternativeName>
        <fullName evidence="1">Chaperonin-60</fullName>
        <shortName evidence="1">Cpn60</shortName>
    </alternativeName>
</protein>
<evidence type="ECO:0000255" key="1">
    <source>
        <dbReference type="HAMAP-Rule" id="MF_00600"/>
    </source>
</evidence>
<comment type="function">
    <text evidence="1">Together with its co-chaperonin GroES, plays an essential role in assisting protein folding. The GroEL-GroES system forms a nano-cage that allows encapsulation of the non-native substrate proteins and provides a physical environment optimized to promote and accelerate protein folding.</text>
</comment>
<comment type="catalytic activity">
    <reaction evidence="1">
        <text>ATP + H2O + a folded polypeptide = ADP + phosphate + an unfolded polypeptide.</text>
        <dbReference type="EC" id="5.6.1.7"/>
    </reaction>
</comment>
<comment type="subunit">
    <text evidence="1">Forms a cylinder of 14 subunits composed of two heptameric rings stacked back-to-back. Interacts with the co-chaperonin GroES.</text>
</comment>
<comment type="interaction">
    <interactant intactId="EBI-2258565">
        <id>P78012</id>
    </interactant>
    <interactant intactId="EBI-2259625">
        <id>P75104</id>
        <label>mnmE</label>
    </interactant>
    <organismsDiffer>false</organismsDiffer>
    <experiments>3</experiments>
</comment>
<comment type="subcellular location">
    <subcellularLocation>
        <location evidence="1">Cytoplasm</location>
    </subcellularLocation>
</comment>
<comment type="similarity">
    <text evidence="1">Belongs to the chaperonin (HSP60) family.</text>
</comment>
<dbReference type="EC" id="5.6.1.7" evidence="1"/>
<dbReference type="EMBL" id="U00089">
    <property type="protein sequence ID" value="AAB95917.1"/>
    <property type="molecule type" value="Genomic_DNA"/>
</dbReference>
<dbReference type="PIR" id="S73595">
    <property type="entry name" value="S73595"/>
</dbReference>
<dbReference type="RefSeq" id="NP_110262.1">
    <property type="nucleotide sequence ID" value="NC_000912.1"/>
</dbReference>
<dbReference type="RefSeq" id="WP_010874930.1">
    <property type="nucleotide sequence ID" value="NZ_OU342337.1"/>
</dbReference>
<dbReference type="SMR" id="P78012"/>
<dbReference type="IntAct" id="P78012">
    <property type="interactions" value="11"/>
</dbReference>
<dbReference type="STRING" id="272634.MPN_573"/>
<dbReference type="EnsemblBacteria" id="AAB95917">
    <property type="protein sequence ID" value="AAB95917"/>
    <property type="gene ID" value="MPN_573"/>
</dbReference>
<dbReference type="GeneID" id="66608744"/>
<dbReference type="KEGG" id="mpn:MPN_573"/>
<dbReference type="PATRIC" id="fig|272634.6.peg.635"/>
<dbReference type="HOGENOM" id="CLU_016503_3_0_14"/>
<dbReference type="OrthoDB" id="9766614at2"/>
<dbReference type="BioCyc" id="MPNE272634:G1GJ3-938-MONOMER"/>
<dbReference type="Proteomes" id="UP000000808">
    <property type="component" value="Chromosome"/>
</dbReference>
<dbReference type="GO" id="GO:0005737">
    <property type="term" value="C:cytoplasm"/>
    <property type="evidence" value="ECO:0007669"/>
    <property type="project" value="UniProtKB-SubCell"/>
</dbReference>
<dbReference type="GO" id="GO:0005524">
    <property type="term" value="F:ATP binding"/>
    <property type="evidence" value="ECO:0007669"/>
    <property type="project" value="UniProtKB-UniRule"/>
</dbReference>
<dbReference type="GO" id="GO:0140662">
    <property type="term" value="F:ATP-dependent protein folding chaperone"/>
    <property type="evidence" value="ECO:0007669"/>
    <property type="project" value="InterPro"/>
</dbReference>
<dbReference type="GO" id="GO:0016853">
    <property type="term" value="F:isomerase activity"/>
    <property type="evidence" value="ECO:0007669"/>
    <property type="project" value="UniProtKB-KW"/>
</dbReference>
<dbReference type="GO" id="GO:0051082">
    <property type="term" value="F:unfolded protein binding"/>
    <property type="evidence" value="ECO:0007669"/>
    <property type="project" value="UniProtKB-UniRule"/>
</dbReference>
<dbReference type="GO" id="GO:0042026">
    <property type="term" value="P:protein refolding"/>
    <property type="evidence" value="ECO:0007669"/>
    <property type="project" value="UniProtKB-UniRule"/>
</dbReference>
<dbReference type="CDD" id="cd03344">
    <property type="entry name" value="GroEL"/>
    <property type="match status" value="1"/>
</dbReference>
<dbReference type="FunFam" id="3.50.7.10:FF:000001">
    <property type="entry name" value="60 kDa chaperonin"/>
    <property type="match status" value="1"/>
</dbReference>
<dbReference type="Gene3D" id="3.50.7.10">
    <property type="entry name" value="GroEL"/>
    <property type="match status" value="1"/>
</dbReference>
<dbReference type="Gene3D" id="1.10.560.10">
    <property type="entry name" value="GroEL-like equatorial domain"/>
    <property type="match status" value="1"/>
</dbReference>
<dbReference type="Gene3D" id="3.30.260.10">
    <property type="entry name" value="TCP-1-like chaperonin intermediate domain"/>
    <property type="match status" value="1"/>
</dbReference>
<dbReference type="HAMAP" id="MF_00600">
    <property type="entry name" value="CH60"/>
    <property type="match status" value="1"/>
</dbReference>
<dbReference type="InterPro" id="IPR018370">
    <property type="entry name" value="Chaperonin_Cpn60_CS"/>
</dbReference>
<dbReference type="InterPro" id="IPR001844">
    <property type="entry name" value="Cpn60/GroEL"/>
</dbReference>
<dbReference type="InterPro" id="IPR002423">
    <property type="entry name" value="Cpn60/GroEL/TCP-1"/>
</dbReference>
<dbReference type="InterPro" id="IPR027409">
    <property type="entry name" value="GroEL-like_apical_dom_sf"/>
</dbReference>
<dbReference type="InterPro" id="IPR027413">
    <property type="entry name" value="GROEL-like_equatorial_sf"/>
</dbReference>
<dbReference type="InterPro" id="IPR027410">
    <property type="entry name" value="TCP-1-like_intermed_sf"/>
</dbReference>
<dbReference type="NCBIfam" id="TIGR02348">
    <property type="entry name" value="GroEL"/>
    <property type="match status" value="1"/>
</dbReference>
<dbReference type="NCBIfam" id="NF000592">
    <property type="entry name" value="PRK00013.1"/>
    <property type="match status" value="1"/>
</dbReference>
<dbReference type="NCBIfam" id="NF009487">
    <property type="entry name" value="PRK12849.1"/>
    <property type="match status" value="1"/>
</dbReference>
<dbReference type="NCBIfam" id="NF009488">
    <property type="entry name" value="PRK12850.1"/>
    <property type="match status" value="1"/>
</dbReference>
<dbReference type="NCBIfam" id="NF009489">
    <property type="entry name" value="PRK12851.1"/>
    <property type="match status" value="1"/>
</dbReference>
<dbReference type="PANTHER" id="PTHR45633">
    <property type="entry name" value="60 KDA HEAT SHOCK PROTEIN, MITOCHONDRIAL"/>
    <property type="match status" value="1"/>
</dbReference>
<dbReference type="Pfam" id="PF00118">
    <property type="entry name" value="Cpn60_TCP1"/>
    <property type="match status" value="1"/>
</dbReference>
<dbReference type="PRINTS" id="PR00298">
    <property type="entry name" value="CHAPERONIN60"/>
</dbReference>
<dbReference type="SUPFAM" id="SSF52029">
    <property type="entry name" value="GroEL apical domain-like"/>
    <property type="match status" value="1"/>
</dbReference>
<dbReference type="SUPFAM" id="SSF48592">
    <property type="entry name" value="GroEL equatorial domain-like"/>
    <property type="match status" value="1"/>
</dbReference>
<dbReference type="SUPFAM" id="SSF54849">
    <property type="entry name" value="GroEL-intermediate domain like"/>
    <property type="match status" value="1"/>
</dbReference>
<dbReference type="PROSITE" id="PS00296">
    <property type="entry name" value="CHAPERONINS_CPN60"/>
    <property type="match status" value="1"/>
</dbReference>
<feature type="chain" id="PRO_0000063445" description="Chaperonin GroEL">
    <location>
        <begin position="1"/>
        <end position="543"/>
    </location>
</feature>
<feature type="binding site" evidence="1">
    <location>
        <begin position="29"/>
        <end position="32"/>
    </location>
    <ligand>
        <name>ATP</name>
        <dbReference type="ChEBI" id="CHEBI:30616"/>
    </ligand>
</feature>
<feature type="binding site" evidence="1">
    <location>
        <begin position="86"/>
        <end position="90"/>
    </location>
    <ligand>
        <name>ATP</name>
        <dbReference type="ChEBI" id="CHEBI:30616"/>
    </ligand>
</feature>
<feature type="binding site" evidence="1">
    <location>
        <position position="413"/>
    </location>
    <ligand>
        <name>ATP</name>
        <dbReference type="ChEBI" id="CHEBI:30616"/>
    </ligand>
</feature>
<feature type="binding site" evidence="1">
    <location>
        <position position="504"/>
    </location>
    <ligand>
        <name>ATP</name>
        <dbReference type="ChEBI" id="CHEBI:30616"/>
    </ligand>
</feature>
<sequence length="543" mass="58086">MAKELVFGKNARNKLLAGINKLADAVKVTVGPKGQNVILGRKFSNPLITNDGVTIAKEIELTDPLENIGAKVISVAAVSTNDIAGDGTTTATILAQEMTNRGVEAVNNGANPVNVRRGIEDASQLIITELDKRSKKINTNEEIEQVAAISSGSKEIGKLIAQAMALVGKNGVITTDDAKTINTTLETTEGIEFKGTYASPYMVSDQEKMEVVLDQPKILVSAMKINTIKEILPLLEGSMENGNPLLIVAPDFAEEVVTTLAVNKLRGTINVVAVKCNEYGERQKAALEDLAISTGTLAYNNELGGGFKDVTVNHLGEARRVQVAKEKTTVIGGKGSKETIQKHLDLLNGRLKQTTEKYDTDLLKERIAHLSQGVAVVRVGGATELAQKELKLRIEDALNSTKAAVEEGIISGGGIALLNVSTILNDSKLADKYKAETSAENLKEILVGYEIVRKSLEAPVRQIIENSGVNPVKVFAELRSEADGVGFDAETKKKVDMIRSGIIDPTKVTKTALEKAASVASSLITTSVAVYDIKENKEGSFQE</sequence>
<proteinExistence type="evidence at protein level"/>
<accession>P78012</accession>
<name>CH60_MYCPN</name>
<gene>
    <name evidence="1" type="primary">groEL</name>
    <name evidence="1" type="synonym">groL</name>
    <name type="synonym">mopA</name>
    <name type="ordered locus">MPN_573</name>
    <name type="ORF">MP269</name>
</gene>
<reference key="1">
    <citation type="journal article" date="1996" name="Nucleic Acids Res.">
        <title>Complete sequence analysis of the genome of the bacterium Mycoplasma pneumoniae.</title>
        <authorList>
            <person name="Himmelreich R."/>
            <person name="Hilbert H."/>
            <person name="Plagens H."/>
            <person name="Pirkl E."/>
            <person name="Li B.-C."/>
            <person name="Herrmann R."/>
        </authorList>
    </citation>
    <scope>NUCLEOTIDE SEQUENCE [LARGE SCALE GENOMIC DNA]</scope>
    <source>
        <strain>ATCC 29342 / M129 / Subtype 1</strain>
    </source>
</reference>